<accession>Q2JFL7</accession>
<gene>
    <name evidence="1" type="primary">nuoD</name>
    <name type="ordered locus">Francci3_0541</name>
</gene>
<feature type="chain" id="PRO_0000357817" description="NADH-quinone oxidoreductase subunit D">
    <location>
        <begin position="1"/>
        <end position="482"/>
    </location>
</feature>
<feature type="region of interest" description="Disordered" evidence="2">
    <location>
        <begin position="1"/>
        <end position="48"/>
    </location>
</feature>
<feature type="compositionally biased region" description="Low complexity" evidence="2">
    <location>
        <begin position="1"/>
        <end position="16"/>
    </location>
</feature>
<feature type="compositionally biased region" description="Gly residues" evidence="2">
    <location>
        <begin position="29"/>
        <end position="42"/>
    </location>
</feature>
<reference key="1">
    <citation type="journal article" date="2007" name="Genome Res.">
        <title>Genome characteristics of facultatively symbiotic Frankia sp. strains reflect host range and host plant biogeography.</title>
        <authorList>
            <person name="Normand P."/>
            <person name="Lapierre P."/>
            <person name="Tisa L.S."/>
            <person name="Gogarten J.P."/>
            <person name="Alloisio N."/>
            <person name="Bagnarol E."/>
            <person name="Bassi C.A."/>
            <person name="Berry A.M."/>
            <person name="Bickhart D.M."/>
            <person name="Choisne N."/>
            <person name="Couloux A."/>
            <person name="Cournoyer B."/>
            <person name="Cruveiller S."/>
            <person name="Daubin V."/>
            <person name="Demange N."/>
            <person name="Francino M.P."/>
            <person name="Goltsman E."/>
            <person name="Huang Y."/>
            <person name="Kopp O.R."/>
            <person name="Labarre L."/>
            <person name="Lapidus A."/>
            <person name="Lavire C."/>
            <person name="Marechal J."/>
            <person name="Martinez M."/>
            <person name="Mastronunzio J.E."/>
            <person name="Mullin B.C."/>
            <person name="Niemann J."/>
            <person name="Pujic P."/>
            <person name="Rawnsley T."/>
            <person name="Rouy Z."/>
            <person name="Schenowitz C."/>
            <person name="Sellstedt A."/>
            <person name="Tavares F."/>
            <person name="Tomkins J.P."/>
            <person name="Vallenet D."/>
            <person name="Valverde C."/>
            <person name="Wall L.G."/>
            <person name="Wang Y."/>
            <person name="Medigue C."/>
            <person name="Benson D.R."/>
        </authorList>
    </citation>
    <scope>NUCLEOTIDE SEQUENCE [LARGE SCALE GENOMIC DNA]</scope>
    <source>
        <strain>DSM 45818 / CECT 9043 / HFP020203 / CcI3</strain>
    </source>
</reference>
<sequence length="482" mass="52199">MTTNTSTSSTTDDLTTGAPNGTGAPDGANGVGGPTGTVGGPGEHPAYEAGFTESANGRVYTVTGSDWEQILGVGEEENERIVVNMGPQHPSTHGVLRLVLEIEGETVTETRLVIGYLHTGIEKSCEYRTWTQAVTFLTRADYLSPLFNEAAYCLSVERLLGITEQVPERATVIRVMVMELQRIASHLVWLATGGMELGATTAMIFGFREREKVLDLLELITGLRMNHAYIRPGGLAQDLPDGAERAIRAFLADMPKRIREYHALLTGQPVWKARMVDVNVLDAAGCIALGTTGPVLRAAGLPWDLRKTMPYCGYETYEFDVPTALEGDSFARYLVRLEEMGESLKIVDQCLDRLRPGPVMVADKKIAWPSQLSVGSDGTGNSLAYIRKIMGTSMEALIHHFKLVTEGFRVPAGQVYTQIESPRGELGYHVVSDGGTRPFRVHVRDPSFVNLQAVPALTEGGQVADVIVGVASVDPVLGGVDR</sequence>
<protein>
    <recommendedName>
        <fullName evidence="1">NADH-quinone oxidoreductase subunit D</fullName>
        <ecNumber evidence="1">7.1.1.-</ecNumber>
    </recommendedName>
    <alternativeName>
        <fullName evidence="1">NADH dehydrogenase I subunit D</fullName>
    </alternativeName>
    <alternativeName>
        <fullName evidence="1">NDH-1 subunit D</fullName>
    </alternativeName>
</protein>
<comment type="function">
    <text evidence="1">NDH-1 shuttles electrons from NADH, via FMN and iron-sulfur (Fe-S) centers, to quinones in the respiratory chain. The immediate electron acceptor for the enzyme in this species is believed to be a menaquinone. Couples the redox reaction to proton translocation (for every two electrons transferred, four hydrogen ions are translocated across the cytoplasmic membrane), and thus conserves the redox energy in a proton gradient.</text>
</comment>
<comment type="catalytic activity">
    <reaction evidence="1">
        <text>a quinone + NADH + 5 H(+)(in) = a quinol + NAD(+) + 4 H(+)(out)</text>
        <dbReference type="Rhea" id="RHEA:57888"/>
        <dbReference type="ChEBI" id="CHEBI:15378"/>
        <dbReference type="ChEBI" id="CHEBI:24646"/>
        <dbReference type="ChEBI" id="CHEBI:57540"/>
        <dbReference type="ChEBI" id="CHEBI:57945"/>
        <dbReference type="ChEBI" id="CHEBI:132124"/>
    </reaction>
</comment>
<comment type="subunit">
    <text evidence="1">NDH-1 is composed of 14 different subunits. Subunits NuoB, C, D, E, F, and G constitute the peripheral sector of the complex.</text>
</comment>
<comment type="subcellular location">
    <subcellularLocation>
        <location evidence="1">Cell membrane</location>
        <topology evidence="1">Peripheral membrane protein</topology>
        <orientation evidence="1">Cytoplasmic side</orientation>
    </subcellularLocation>
</comment>
<comment type="similarity">
    <text evidence="1">Belongs to the complex I 49 kDa subunit family.</text>
</comment>
<keyword id="KW-1003">Cell membrane</keyword>
<keyword id="KW-0472">Membrane</keyword>
<keyword id="KW-0520">NAD</keyword>
<keyword id="KW-0874">Quinone</keyword>
<keyword id="KW-1185">Reference proteome</keyword>
<keyword id="KW-1278">Translocase</keyword>
<keyword id="KW-0813">Transport</keyword>
<evidence type="ECO:0000255" key="1">
    <source>
        <dbReference type="HAMAP-Rule" id="MF_01358"/>
    </source>
</evidence>
<evidence type="ECO:0000256" key="2">
    <source>
        <dbReference type="SAM" id="MobiDB-lite"/>
    </source>
</evidence>
<dbReference type="EC" id="7.1.1.-" evidence="1"/>
<dbReference type="EMBL" id="CP000249">
    <property type="protein sequence ID" value="ABD09925.1"/>
    <property type="molecule type" value="Genomic_DNA"/>
</dbReference>
<dbReference type="RefSeq" id="WP_011435001.1">
    <property type="nucleotide sequence ID" value="NZ_JENI01000098.1"/>
</dbReference>
<dbReference type="SMR" id="Q2JFL7"/>
<dbReference type="STRING" id="106370.Francci3_0541"/>
<dbReference type="KEGG" id="fra:Francci3_0541"/>
<dbReference type="eggNOG" id="COG0649">
    <property type="taxonomic scope" value="Bacteria"/>
</dbReference>
<dbReference type="HOGENOM" id="CLU_015134_1_2_11"/>
<dbReference type="OrthoDB" id="9801496at2"/>
<dbReference type="PhylomeDB" id="Q2JFL7"/>
<dbReference type="Proteomes" id="UP000001937">
    <property type="component" value="Chromosome"/>
</dbReference>
<dbReference type="GO" id="GO:0005886">
    <property type="term" value="C:plasma membrane"/>
    <property type="evidence" value="ECO:0007669"/>
    <property type="project" value="UniProtKB-SubCell"/>
</dbReference>
<dbReference type="GO" id="GO:0051287">
    <property type="term" value="F:NAD binding"/>
    <property type="evidence" value="ECO:0007669"/>
    <property type="project" value="InterPro"/>
</dbReference>
<dbReference type="GO" id="GO:0050136">
    <property type="term" value="F:NADH:ubiquinone reductase (non-electrogenic) activity"/>
    <property type="evidence" value="ECO:0007669"/>
    <property type="project" value="UniProtKB-UniRule"/>
</dbReference>
<dbReference type="GO" id="GO:0048038">
    <property type="term" value="F:quinone binding"/>
    <property type="evidence" value="ECO:0007669"/>
    <property type="project" value="UniProtKB-KW"/>
</dbReference>
<dbReference type="Gene3D" id="1.10.645.10">
    <property type="entry name" value="Cytochrome-c3 Hydrogenase, chain B"/>
    <property type="match status" value="1"/>
</dbReference>
<dbReference type="HAMAP" id="MF_01358">
    <property type="entry name" value="NDH1_NuoD"/>
    <property type="match status" value="1"/>
</dbReference>
<dbReference type="InterPro" id="IPR001135">
    <property type="entry name" value="NADH_Q_OxRdtase_suD"/>
</dbReference>
<dbReference type="InterPro" id="IPR022885">
    <property type="entry name" value="NDH1_su_D/H"/>
</dbReference>
<dbReference type="InterPro" id="IPR029014">
    <property type="entry name" value="NiFe-Hase_large"/>
</dbReference>
<dbReference type="NCBIfam" id="TIGR01962">
    <property type="entry name" value="NuoD"/>
    <property type="match status" value="1"/>
</dbReference>
<dbReference type="NCBIfam" id="NF004739">
    <property type="entry name" value="PRK06075.1"/>
    <property type="match status" value="1"/>
</dbReference>
<dbReference type="PANTHER" id="PTHR11993:SF10">
    <property type="entry name" value="NADH DEHYDROGENASE [UBIQUINONE] IRON-SULFUR PROTEIN 2, MITOCHONDRIAL"/>
    <property type="match status" value="1"/>
</dbReference>
<dbReference type="PANTHER" id="PTHR11993">
    <property type="entry name" value="NADH-UBIQUINONE OXIDOREDUCTASE 49 KDA SUBUNIT"/>
    <property type="match status" value="1"/>
</dbReference>
<dbReference type="Pfam" id="PF00346">
    <property type="entry name" value="Complex1_49kDa"/>
    <property type="match status" value="1"/>
</dbReference>
<dbReference type="SUPFAM" id="SSF56762">
    <property type="entry name" value="HydB/Nqo4-like"/>
    <property type="match status" value="1"/>
</dbReference>
<name>NUOD_FRACC</name>
<proteinExistence type="inferred from homology"/>
<organism>
    <name type="scientific">Frankia casuarinae (strain DSM 45818 / CECT 9043 / HFP020203 / CcI3)</name>
    <dbReference type="NCBI Taxonomy" id="106370"/>
    <lineage>
        <taxon>Bacteria</taxon>
        <taxon>Bacillati</taxon>
        <taxon>Actinomycetota</taxon>
        <taxon>Actinomycetes</taxon>
        <taxon>Frankiales</taxon>
        <taxon>Frankiaceae</taxon>
        <taxon>Frankia</taxon>
    </lineage>
</organism>